<comment type="function">
    <text evidence="1">Part of the ABC transporter complex PotABCD involved in spermidine/putrescine import. Responsible for energy coupling to the transport system.</text>
</comment>
<comment type="catalytic activity">
    <reaction evidence="1">
        <text>ATP + H2O + polyamine-[polyamine-binding protein]Side 1 = ADP + phosphate + polyamineSide 2 + [polyamine-binding protein]Side 1.</text>
        <dbReference type="EC" id="7.6.2.11"/>
    </reaction>
</comment>
<comment type="subunit">
    <text evidence="1">The complex is composed of two ATP-binding proteins (PotA), two transmembrane proteins (PotB and PotC) and a solute-binding protein (PotD).</text>
</comment>
<comment type="subcellular location">
    <subcellularLocation>
        <location evidence="1">Cell membrane</location>
        <topology evidence="1">Peripheral membrane protein</topology>
    </subcellularLocation>
</comment>
<comment type="similarity">
    <text evidence="1">Belongs to the ABC transporter superfamily. Spermidine/putrescine importer (TC 3.A.1.11.1) family.</text>
</comment>
<name>POTA_STAA3</name>
<protein>
    <recommendedName>
        <fullName evidence="1">Spermidine/putrescine import ATP-binding protein PotA</fullName>
        <ecNumber evidence="1">7.6.2.11</ecNumber>
    </recommendedName>
</protein>
<evidence type="ECO:0000255" key="1">
    <source>
        <dbReference type="HAMAP-Rule" id="MF_01726"/>
    </source>
</evidence>
<feature type="chain" id="PRO_0000286293" description="Spermidine/putrescine import ATP-binding protein PotA">
    <location>
        <begin position="1"/>
        <end position="364"/>
    </location>
</feature>
<feature type="domain" description="ABC transporter" evidence="1">
    <location>
        <begin position="5"/>
        <end position="235"/>
    </location>
</feature>
<feature type="binding site" evidence="1">
    <location>
        <begin position="37"/>
        <end position="44"/>
    </location>
    <ligand>
        <name>ATP</name>
        <dbReference type="ChEBI" id="CHEBI:30616"/>
    </ligand>
</feature>
<accession>Q2FHY1</accession>
<sequence>MEPLLSLKSVSKSYDDLNILDDIDIDIESGYFYTLLGPSGCGKTTILKLIAGFEYPDSGEVIYQNKPIGNLPPNKRKVNTVFQDYALFPHLNVYDNIAFGLKLKKLSKTEIDQKVTEALKLVKLSGYEKRNINEMSGGQKQRVAIARAIVNEPEILLLDESLSALDLKLRTEMQYELRELQSRLGITFIFVTHDQEEALALSDFLFVLKDGKIQQFGTPTDIYDEPVNRFVADFIGESNIVEGRMVRDYVVNIYGQDFECVDMGIPENKKVEVVIRPEDISLIKAEEGLFKATVDSMLFRGVHYEICCIDNKGYEWVIQTTKKAEVGSEVGLYFDPEAIHIMVPGETEEEFDKRIESYEEVDNA</sequence>
<gene>
    <name evidence="1" type="primary">potA</name>
    <name type="ordered locus">SAUSA300_0999</name>
</gene>
<organism>
    <name type="scientific">Staphylococcus aureus (strain USA300)</name>
    <dbReference type="NCBI Taxonomy" id="367830"/>
    <lineage>
        <taxon>Bacteria</taxon>
        <taxon>Bacillati</taxon>
        <taxon>Bacillota</taxon>
        <taxon>Bacilli</taxon>
        <taxon>Bacillales</taxon>
        <taxon>Staphylococcaceae</taxon>
        <taxon>Staphylococcus</taxon>
    </lineage>
</organism>
<keyword id="KW-0067">ATP-binding</keyword>
<keyword id="KW-1003">Cell membrane</keyword>
<keyword id="KW-0472">Membrane</keyword>
<keyword id="KW-0547">Nucleotide-binding</keyword>
<keyword id="KW-1278">Translocase</keyword>
<keyword id="KW-0813">Transport</keyword>
<reference key="1">
    <citation type="journal article" date="2006" name="Lancet">
        <title>Complete genome sequence of USA300, an epidemic clone of community-acquired meticillin-resistant Staphylococcus aureus.</title>
        <authorList>
            <person name="Diep B.A."/>
            <person name="Gill S.R."/>
            <person name="Chang R.F."/>
            <person name="Phan T.H."/>
            <person name="Chen J.H."/>
            <person name="Davidson M.G."/>
            <person name="Lin F."/>
            <person name="Lin J."/>
            <person name="Carleton H.A."/>
            <person name="Mongodin E.F."/>
            <person name="Sensabaugh G.F."/>
            <person name="Perdreau-Remington F."/>
        </authorList>
    </citation>
    <scope>NUCLEOTIDE SEQUENCE [LARGE SCALE GENOMIC DNA]</scope>
    <source>
        <strain>USA300</strain>
    </source>
</reference>
<proteinExistence type="inferred from homology"/>
<dbReference type="EC" id="7.6.2.11" evidence="1"/>
<dbReference type="EMBL" id="CP000255">
    <property type="protein sequence ID" value="ABD20960.1"/>
    <property type="molecule type" value="Genomic_DNA"/>
</dbReference>
<dbReference type="RefSeq" id="WP_000433551.1">
    <property type="nucleotide sequence ID" value="NZ_CP027476.1"/>
</dbReference>
<dbReference type="SMR" id="Q2FHY1"/>
<dbReference type="KEGG" id="saa:SAUSA300_0999"/>
<dbReference type="HOGENOM" id="CLU_000604_1_1_9"/>
<dbReference type="OMA" id="HVMRFGE"/>
<dbReference type="Proteomes" id="UP000001939">
    <property type="component" value="Chromosome"/>
</dbReference>
<dbReference type="GO" id="GO:0043190">
    <property type="term" value="C:ATP-binding cassette (ABC) transporter complex"/>
    <property type="evidence" value="ECO:0007669"/>
    <property type="project" value="InterPro"/>
</dbReference>
<dbReference type="GO" id="GO:0015417">
    <property type="term" value="F:ABC-type polyamine transporter activity"/>
    <property type="evidence" value="ECO:0007669"/>
    <property type="project" value="UniProtKB-EC"/>
</dbReference>
<dbReference type="GO" id="GO:0005524">
    <property type="term" value="F:ATP binding"/>
    <property type="evidence" value="ECO:0007669"/>
    <property type="project" value="UniProtKB-KW"/>
</dbReference>
<dbReference type="GO" id="GO:0016887">
    <property type="term" value="F:ATP hydrolysis activity"/>
    <property type="evidence" value="ECO:0007669"/>
    <property type="project" value="InterPro"/>
</dbReference>
<dbReference type="FunFam" id="3.40.50.300:FF:000133">
    <property type="entry name" value="Spermidine/putrescine import ATP-binding protein PotA"/>
    <property type="match status" value="1"/>
</dbReference>
<dbReference type="Gene3D" id="2.40.50.100">
    <property type="match status" value="1"/>
</dbReference>
<dbReference type="Gene3D" id="3.40.50.300">
    <property type="entry name" value="P-loop containing nucleotide triphosphate hydrolases"/>
    <property type="match status" value="1"/>
</dbReference>
<dbReference type="InterPro" id="IPR003593">
    <property type="entry name" value="AAA+_ATPase"/>
</dbReference>
<dbReference type="InterPro" id="IPR050093">
    <property type="entry name" value="ABC_SmlMolc_Importer"/>
</dbReference>
<dbReference type="InterPro" id="IPR003439">
    <property type="entry name" value="ABC_transporter-like_ATP-bd"/>
</dbReference>
<dbReference type="InterPro" id="IPR017871">
    <property type="entry name" value="ABC_transporter-like_CS"/>
</dbReference>
<dbReference type="InterPro" id="IPR008995">
    <property type="entry name" value="Mo/tungstate-bd_C_term_dom"/>
</dbReference>
<dbReference type="InterPro" id="IPR027417">
    <property type="entry name" value="P-loop_NTPase"/>
</dbReference>
<dbReference type="InterPro" id="IPR013611">
    <property type="entry name" value="Transp-assoc_OB_typ2"/>
</dbReference>
<dbReference type="PANTHER" id="PTHR42781">
    <property type="entry name" value="SPERMIDINE/PUTRESCINE IMPORT ATP-BINDING PROTEIN POTA"/>
    <property type="match status" value="1"/>
</dbReference>
<dbReference type="PANTHER" id="PTHR42781:SF4">
    <property type="entry name" value="SPERMIDINE_PUTRESCINE IMPORT ATP-BINDING PROTEIN POTA"/>
    <property type="match status" value="1"/>
</dbReference>
<dbReference type="Pfam" id="PF00005">
    <property type="entry name" value="ABC_tran"/>
    <property type="match status" value="1"/>
</dbReference>
<dbReference type="Pfam" id="PF08402">
    <property type="entry name" value="TOBE_2"/>
    <property type="match status" value="1"/>
</dbReference>
<dbReference type="SMART" id="SM00382">
    <property type="entry name" value="AAA"/>
    <property type="match status" value="1"/>
</dbReference>
<dbReference type="SUPFAM" id="SSF50331">
    <property type="entry name" value="MOP-like"/>
    <property type="match status" value="1"/>
</dbReference>
<dbReference type="SUPFAM" id="SSF52540">
    <property type="entry name" value="P-loop containing nucleoside triphosphate hydrolases"/>
    <property type="match status" value="1"/>
</dbReference>
<dbReference type="PROSITE" id="PS00211">
    <property type="entry name" value="ABC_TRANSPORTER_1"/>
    <property type="match status" value="1"/>
</dbReference>
<dbReference type="PROSITE" id="PS50893">
    <property type="entry name" value="ABC_TRANSPORTER_2"/>
    <property type="match status" value="1"/>
</dbReference>
<dbReference type="PROSITE" id="PS51305">
    <property type="entry name" value="POTA"/>
    <property type="match status" value="1"/>
</dbReference>